<keyword id="KW-0030">Aminoacyl-tRNA synthetase</keyword>
<keyword id="KW-0067">ATP-binding</keyword>
<keyword id="KW-0963">Cytoplasm</keyword>
<keyword id="KW-0436">Ligase</keyword>
<keyword id="KW-0547">Nucleotide-binding</keyword>
<keyword id="KW-0648">Protein biosynthesis</keyword>
<keyword id="KW-1185">Reference proteome</keyword>
<proteinExistence type="inferred from homology"/>
<comment type="catalytic activity">
    <reaction evidence="1">
        <text>tRNA(His) + L-histidine + ATP = L-histidyl-tRNA(His) + AMP + diphosphate + H(+)</text>
        <dbReference type="Rhea" id="RHEA:17313"/>
        <dbReference type="Rhea" id="RHEA-COMP:9665"/>
        <dbReference type="Rhea" id="RHEA-COMP:9689"/>
        <dbReference type="ChEBI" id="CHEBI:15378"/>
        <dbReference type="ChEBI" id="CHEBI:30616"/>
        <dbReference type="ChEBI" id="CHEBI:33019"/>
        <dbReference type="ChEBI" id="CHEBI:57595"/>
        <dbReference type="ChEBI" id="CHEBI:78442"/>
        <dbReference type="ChEBI" id="CHEBI:78527"/>
        <dbReference type="ChEBI" id="CHEBI:456215"/>
        <dbReference type="EC" id="6.1.1.21"/>
    </reaction>
</comment>
<comment type="subunit">
    <text evidence="1">Homodimer.</text>
</comment>
<comment type="subcellular location">
    <subcellularLocation>
        <location evidence="1">Cytoplasm</location>
    </subcellularLocation>
</comment>
<comment type="similarity">
    <text evidence="1">Belongs to the class-II aminoacyl-tRNA synthetase family.</text>
</comment>
<gene>
    <name evidence="1" type="primary">hisS</name>
    <name type="ordered locus">RB251</name>
</gene>
<organism>
    <name type="scientific">Rhodopirellula baltica (strain DSM 10527 / NCIMB 13988 / SH1)</name>
    <dbReference type="NCBI Taxonomy" id="243090"/>
    <lineage>
        <taxon>Bacteria</taxon>
        <taxon>Pseudomonadati</taxon>
        <taxon>Planctomycetota</taxon>
        <taxon>Planctomycetia</taxon>
        <taxon>Pirellulales</taxon>
        <taxon>Pirellulaceae</taxon>
        <taxon>Rhodopirellula</taxon>
    </lineage>
</organism>
<protein>
    <recommendedName>
        <fullName evidence="1">Histidine--tRNA ligase</fullName>
        <ecNumber evidence="1">6.1.1.21</ecNumber>
    </recommendedName>
    <alternativeName>
        <fullName evidence="1">Histidyl-tRNA synthetase</fullName>
        <shortName evidence="1">HisRS</shortName>
    </alternativeName>
</protein>
<reference key="1">
    <citation type="journal article" date="2003" name="Proc. Natl. Acad. Sci. U.S.A.">
        <title>Complete genome sequence of the marine planctomycete Pirellula sp. strain 1.</title>
        <authorList>
            <person name="Gloeckner F.O."/>
            <person name="Kube M."/>
            <person name="Bauer M."/>
            <person name="Teeling H."/>
            <person name="Lombardot T."/>
            <person name="Ludwig W."/>
            <person name="Gade D."/>
            <person name="Beck A."/>
            <person name="Borzym K."/>
            <person name="Heitmann K."/>
            <person name="Rabus R."/>
            <person name="Schlesner H."/>
            <person name="Amann R."/>
            <person name="Reinhardt R."/>
        </authorList>
    </citation>
    <scope>NUCLEOTIDE SEQUENCE [LARGE SCALE GENOMIC DNA]</scope>
    <source>
        <strain>DSM 10527 / NCIMB 13988 / SH1</strain>
    </source>
</reference>
<dbReference type="EC" id="6.1.1.21" evidence="1"/>
<dbReference type="EMBL" id="BX294133">
    <property type="protein sequence ID" value="CAD71466.1"/>
    <property type="molecule type" value="Genomic_DNA"/>
</dbReference>
<dbReference type="RefSeq" id="NP_863795.1">
    <property type="nucleotide sequence ID" value="NC_005027.1"/>
</dbReference>
<dbReference type="RefSeq" id="WP_011117814.1">
    <property type="nucleotide sequence ID" value="NC_005027.1"/>
</dbReference>
<dbReference type="SMR" id="Q7UZ20"/>
<dbReference type="FunCoup" id="Q7UZ20">
    <property type="interactions" value="494"/>
</dbReference>
<dbReference type="STRING" id="243090.RB251"/>
<dbReference type="EnsemblBacteria" id="CAD71466">
    <property type="protein sequence ID" value="CAD71466"/>
    <property type="gene ID" value="RB251"/>
</dbReference>
<dbReference type="KEGG" id="rba:RB251"/>
<dbReference type="PATRIC" id="fig|243090.15.peg.125"/>
<dbReference type="eggNOG" id="COG0124">
    <property type="taxonomic scope" value="Bacteria"/>
</dbReference>
<dbReference type="HOGENOM" id="CLU_025113_3_0_0"/>
<dbReference type="InParanoid" id="Q7UZ20"/>
<dbReference type="OrthoDB" id="9800814at2"/>
<dbReference type="Proteomes" id="UP000001025">
    <property type="component" value="Chromosome"/>
</dbReference>
<dbReference type="GO" id="GO:0005737">
    <property type="term" value="C:cytoplasm"/>
    <property type="evidence" value="ECO:0007669"/>
    <property type="project" value="UniProtKB-SubCell"/>
</dbReference>
<dbReference type="GO" id="GO:0005524">
    <property type="term" value="F:ATP binding"/>
    <property type="evidence" value="ECO:0007669"/>
    <property type="project" value="UniProtKB-UniRule"/>
</dbReference>
<dbReference type="GO" id="GO:0004821">
    <property type="term" value="F:histidine-tRNA ligase activity"/>
    <property type="evidence" value="ECO:0007669"/>
    <property type="project" value="UniProtKB-UniRule"/>
</dbReference>
<dbReference type="GO" id="GO:0006427">
    <property type="term" value="P:histidyl-tRNA aminoacylation"/>
    <property type="evidence" value="ECO:0007669"/>
    <property type="project" value="UniProtKB-UniRule"/>
</dbReference>
<dbReference type="CDD" id="cd00773">
    <property type="entry name" value="HisRS-like_core"/>
    <property type="match status" value="1"/>
</dbReference>
<dbReference type="CDD" id="cd00859">
    <property type="entry name" value="HisRS_anticodon"/>
    <property type="match status" value="1"/>
</dbReference>
<dbReference type="Gene3D" id="3.40.50.800">
    <property type="entry name" value="Anticodon-binding domain"/>
    <property type="match status" value="1"/>
</dbReference>
<dbReference type="Gene3D" id="3.30.930.10">
    <property type="entry name" value="Bira Bifunctional Protein, Domain 2"/>
    <property type="match status" value="1"/>
</dbReference>
<dbReference type="HAMAP" id="MF_00127">
    <property type="entry name" value="His_tRNA_synth"/>
    <property type="match status" value="1"/>
</dbReference>
<dbReference type="InterPro" id="IPR006195">
    <property type="entry name" value="aa-tRNA-synth_II"/>
</dbReference>
<dbReference type="InterPro" id="IPR045864">
    <property type="entry name" value="aa-tRNA-synth_II/BPL/LPL"/>
</dbReference>
<dbReference type="InterPro" id="IPR004154">
    <property type="entry name" value="Anticodon-bd"/>
</dbReference>
<dbReference type="InterPro" id="IPR036621">
    <property type="entry name" value="Anticodon-bd_dom_sf"/>
</dbReference>
<dbReference type="InterPro" id="IPR015807">
    <property type="entry name" value="His-tRNA-ligase"/>
</dbReference>
<dbReference type="InterPro" id="IPR041715">
    <property type="entry name" value="HisRS-like_core"/>
</dbReference>
<dbReference type="InterPro" id="IPR004516">
    <property type="entry name" value="HisRS/HisZ"/>
</dbReference>
<dbReference type="InterPro" id="IPR033656">
    <property type="entry name" value="HisRS_anticodon"/>
</dbReference>
<dbReference type="NCBIfam" id="TIGR00442">
    <property type="entry name" value="hisS"/>
    <property type="match status" value="1"/>
</dbReference>
<dbReference type="PANTHER" id="PTHR11476:SF7">
    <property type="entry name" value="HISTIDINE--TRNA LIGASE"/>
    <property type="match status" value="1"/>
</dbReference>
<dbReference type="PANTHER" id="PTHR11476">
    <property type="entry name" value="HISTIDYL-TRNA SYNTHETASE"/>
    <property type="match status" value="1"/>
</dbReference>
<dbReference type="Pfam" id="PF03129">
    <property type="entry name" value="HGTP_anticodon"/>
    <property type="match status" value="1"/>
</dbReference>
<dbReference type="Pfam" id="PF13393">
    <property type="entry name" value="tRNA-synt_His"/>
    <property type="match status" value="1"/>
</dbReference>
<dbReference type="PIRSF" id="PIRSF001549">
    <property type="entry name" value="His-tRNA_synth"/>
    <property type="match status" value="1"/>
</dbReference>
<dbReference type="SUPFAM" id="SSF52954">
    <property type="entry name" value="Class II aaRS ABD-related"/>
    <property type="match status" value="1"/>
</dbReference>
<dbReference type="SUPFAM" id="SSF55681">
    <property type="entry name" value="Class II aaRS and biotin synthetases"/>
    <property type="match status" value="1"/>
</dbReference>
<dbReference type="PROSITE" id="PS50862">
    <property type="entry name" value="AA_TRNA_LIGASE_II"/>
    <property type="match status" value="1"/>
</dbReference>
<name>SYH_RHOBA</name>
<accession>Q7UZ20</accession>
<sequence length="442" mass="47667">MIQPRTLKGFRDYLPAAMIPREQLMQTAREVFRSFGFAPIDTPTLEHLEILTGKGSDETDRQLYSFEDNGGRPVGMRFDLTVPLARFAAQHIGTLGTPFKRYHIAPVWRGEKPQEGRYREFVQCDFDTIGTTSELADIEAVCVIDALLRAIGIDAFTISINNRAILTGLLESLGLADKTTPVLRSLDKLGKIGREKTANEMVESAGVTAEQADAVLRLAECDGDAESILASLPEITGGNETAAAGIERLTQIYRGALASGVSPDRLKIDVSIARGLDYYTGVIFETTLDELPGIGSVCSGGRYDNLAGLYTKQHLPGIGASLGLDRLLAALESLGRLSGVSKPCAVFVPFFDKGHRDDYLKLASQLRDAGIGVEVYPEPKKLGQQLKYADSQGFAVAIIAGGNEWEAGAVQVKTLATKESQDVAYSHESPDALIEAIQAATS</sequence>
<feature type="chain" id="PRO_0000136236" description="Histidine--tRNA ligase">
    <location>
        <begin position="1"/>
        <end position="442"/>
    </location>
</feature>
<evidence type="ECO:0000255" key="1">
    <source>
        <dbReference type="HAMAP-Rule" id="MF_00127"/>
    </source>
</evidence>